<protein>
    <recommendedName>
        <fullName evidence="1">Large ribosomal subunit protein bL35</fullName>
    </recommendedName>
    <alternativeName>
        <fullName evidence="2">50S ribosomal protein L35</fullName>
    </alternativeName>
</protein>
<keyword id="KW-1185">Reference proteome</keyword>
<keyword id="KW-0687">Ribonucleoprotein</keyword>
<keyword id="KW-0689">Ribosomal protein</keyword>
<evidence type="ECO:0000255" key="1">
    <source>
        <dbReference type="HAMAP-Rule" id="MF_00514"/>
    </source>
</evidence>
<evidence type="ECO:0000305" key="2"/>
<proteinExistence type="inferred from homology"/>
<feature type="chain" id="PRO_1000127393" description="Large ribosomal subunit protein bL35">
    <location>
        <begin position="1"/>
        <end position="65"/>
    </location>
</feature>
<comment type="similarity">
    <text evidence="1">Belongs to the bacterial ribosomal protein bL35 family.</text>
</comment>
<dbReference type="EMBL" id="AM942759">
    <property type="protein sequence ID" value="CAR42258.1"/>
    <property type="molecule type" value="Genomic_DNA"/>
</dbReference>
<dbReference type="RefSeq" id="WP_004242608.1">
    <property type="nucleotide sequence ID" value="NC_010554.1"/>
</dbReference>
<dbReference type="SMR" id="B4ETK8"/>
<dbReference type="EnsemblBacteria" id="CAR42258">
    <property type="protein sequence ID" value="CAR42258"/>
    <property type="gene ID" value="PMI1036"/>
</dbReference>
<dbReference type="GeneID" id="6800282"/>
<dbReference type="KEGG" id="pmr:PMI1036"/>
<dbReference type="eggNOG" id="COG0291">
    <property type="taxonomic scope" value="Bacteria"/>
</dbReference>
<dbReference type="HOGENOM" id="CLU_169643_1_1_6"/>
<dbReference type="Proteomes" id="UP000008319">
    <property type="component" value="Chromosome"/>
</dbReference>
<dbReference type="GO" id="GO:0022625">
    <property type="term" value="C:cytosolic large ribosomal subunit"/>
    <property type="evidence" value="ECO:0007669"/>
    <property type="project" value="TreeGrafter"/>
</dbReference>
<dbReference type="GO" id="GO:0003735">
    <property type="term" value="F:structural constituent of ribosome"/>
    <property type="evidence" value="ECO:0007669"/>
    <property type="project" value="InterPro"/>
</dbReference>
<dbReference type="GO" id="GO:0006412">
    <property type="term" value="P:translation"/>
    <property type="evidence" value="ECO:0007669"/>
    <property type="project" value="UniProtKB-UniRule"/>
</dbReference>
<dbReference type="FunFam" id="4.10.410.60:FF:000001">
    <property type="entry name" value="50S ribosomal protein L35"/>
    <property type="match status" value="1"/>
</dbReference>
<dbReference type="Gene3D" id="4.10.410.60">
    <property type="match status" value="1"/>
</dbReference>
<dbReference type="HAMAP" id="MF_00514">
    <property type="entry name" value="Ribosomal_bL35"/>
    <property type="match status" value="1"/>
</dbReference>
<dbReference type="InterPro" id="IPR001706">
    <property type="entry name" value="Ribosomal_bL35"/>
</dbReference>
<dbReference type="InterPro" id="IPR021137">
    <property type="entry name" value="Ribosomal_bL35-like"/>
</dbReference>
<dbReference type="InterPro" id="IPR018265">
    <property type="entry name" value="Ribosomal_bL35_CS"/>
</dbReference>
<dbReference type="InterPro" id="IPR037229">
    <property type="entry name" value="Ribosomal_bL35_sf"/>
</dbReference>
<dbReference type="NCBIfam" id="TIGR00001">
    <property type="entry name" value="rpmI_bact"/>
    <property type="match status" value="1"/>
</dbReference>
<dbReference type="PANTHER" id="PTHR33343">
    <property type="entry name" value="54S RIBOSOMAL PROTEIN BL35M"/>
    <property type="match status" value="1"/>
</dbReference>
<dbReference type="PANTHER" id="PTHR33343:SF1">
    <property type="entry name" value="LARGE RIBOSOMAL SUBUNIT PROTEIN BL35M"/>
    <property type="match status" value="1"/>
</dbReference>
<dbReference type="Pfam" id="PF01632">
    <property type="entry name" value="Ribosomal_L35p"/>
    <property type="match status" value="1"/>
</dbReference>
<dbReference type="PRINTS" id="PR00064">
    <property type="entry name" value="RIBOSOMALL35"/>
</dbReference>
<dbReference type="SUPFAM" id="SSF143034">
    <property type="entry name" value="L35p-like"/>
    <property type="match status" value="1"/>
</dbReference>
<dbReference type="PROSITE" id="PS00936">
    <property type="entry name" value="RIBOSOMAL_L35"/>
    <property type="match status" value="1"/>
</dbReference>
<gene>
    <name evidence="1" type="primary">rpmI</name>
    <name type="ordered locus">PMI1036</name>
</gene>
<sequence>MPKIKTVRGAAKRFKKTAGGGFKRKHANLRHILTKKSTKRKRHLRPKGMISKGDLGLVVACLPYA</sequence>
<name>RL35_PROMH</name>
<organism>
    <name type="scientific">Proteus mirabilis (strain HI4320)</name>
    <dbReference type="NCBI Taxonomy" id="529507"/>
    <lineage>
        <taxon>Bacteria</taxon>
        <taxon>Pseudomonadati</taxon>
        <taxon>Pseudomonadota</taxon>
        <taxon>Gammaproteobacteria</taxon>
        <taxon>Enterobacterales</taxon>
        <taxon>Morganellaceae</taxon>
        <taxon>Proteus</taxon>
    </lineage>
</organism>
<reference key="1">
    <citation type="journal article" date="2008" name="J. Bacteriol.">
        <title>Complete genome sequence of uropathogenic Proteus mirabilis, a master of both adherence and motility.</title>
        <authorList>
            <person name="Pearson M.M."/>
            <person name="Sebaihia M."/>
            <person name="Churcher C."/>
            <person name="Quail M.A."/>
            <person name="Seshasayee A.S."/>
            <person name="Luscombe N.M."/>
            <person name="Abdellah Z."/>
            <person name="Arrosmith C."/>
            <person name="Atkin B."/>
            <person name="Chillingworth T."/>
            <person name="Hauser H."/>
            <person name="Jagels K."/>
            <person name="Moule S."/>
            <person name="Mungall K."/>
            <person name="Norbertczak H."/>
            <person name="Rabbinowitsch E."/>
            <person name="Walker D."/>
            <person name="Whithead S."/>
            <person name="Thomson N.R."/>
            <person name="Rather P.N."/>
            <person name="Parkhill J."/>
            <person name="Mobley H.L.T."/>
        </authorList>
    </citation>
    <scope>NUCLEOTIDE SEQUENCE [LARGE SCALE GENOMIC DNA]</scope>
    <source>
        <strain>HI4320</strain>
    </source>
</reference>
<accession>B4ETK8</accession>